<gene>
    <name evidence="1" type="primary">infC</name>
    <name type="ordered locus">aq_1777</name>
</gene>
<reference key="1">
    <citation type="journal article" date="1998" name="Nature">
        <title>The complete genome of the hyperthermophilic bacterium Aquifex aeolicus.</title>
        <authorList>
            <person name="Deckert G."/>
            <person name="Warren P.V."/>
            <person name="Gaasterland T."/>
            <person name="Young W.G."/>
            <person name="Lenox A.L."/>
            <person name="Graham D.E."/>
            <person name="Overbeek R."/>
            <person name="Snead M.A."/>
            <person name="Keller M."/>
            <person name="Aujay M."/>
            <person name="Huber R."/>
            <person name="Feldman R.A."/>
            <person name="Short J.M."/>
            <person name="Olsen G.J."/>
            <person name="Swanson R.V."/>
        </authorList>
    </citation>
    <scope>NUCLEOTIDE SEQUENCE [LARGE SCALE GENOMIC DNA]</scope>
    <source>
        <strain>VF5</strain>
    </source>
</reference>
<organism>
    <name type="scientific">Aquifex aeolicus (strain VF5)</name>
    <dbReference type="NCBI Taxonomy" id="224324"/>
    <lineage>
        <taxon>Bacteria</taxon>
        <taxon>Pseudomonadati</taxon>
        <taxon>Aquificota</taxon>
        <taxon>Aquificia</taxon>
        <taxon>Aquificales</taxon>
        <taxon>Aquificaceae</taxon>
        <taxon>Aquifex</taxon>
    </lineage>
</organism>
<accession>O67653</accession>
<name>IF3_AQUAE</name>
<feature type="chain" id="PRO_0000177472" description="Translation initiation factor IF-3">
    <location>
        <begin position="1"/>
        <end position="175"/>
    </location>
</feature>
<evidence type="ECO:0000255" key="1">
    <source>
        <dbReference type="HAMAP-Rule" id="MF_00080"/>
    </source>
</evidence>
<proteinExistence type="inferred from homology"/>
<comment type="function">
    <text evidence="1">IF-3 binds to the 30S ribosomal subunit and shifts the equilibrium between 70S ribosomes and their 50S and 30S subunits in favor of the free subunits, thus enhancing the availability of 30S subunits on which protein synthesis initiation begins.</text>
</comment>
<comment type="subunit">
    <text evidence="1">Monomer.</text>
</comment>
<comment type="subcellular location">
    <subcellularLocation>
        <location evidence="1">Cytoplasm</location>
    </subcellularLocation>
</comment>
<comment type="similarity">
    <text evidence="1">Belongs to the IF-3 family.</text>
</comment>
<sequence length="175" mass="20820">MSKLKEYRVNRQIRAKECRLIDENGQQIGIVPIEEALKIAEEKGLDLVEIAPQAKPPVCKIMDYGKFKYELKKKEREARKKQREHQIEVKDIRMKVRIDEHDLQVKLKHMREFLEEGDKVKVWLRFRGRENIYPELGKKLAERIINELSDIAEVEVQPKKEGNFMIFVLAPKRKK</sequence>
<protein>
    <recommendedName>
        <fullName evidence="1">Translation initiation factor IF-3</fullName>
    </recommendedName>
</protein>
<keyword id="KW-0963">Cytoplasm</keyword>
<keyword id="KW-0396">Initiation factor</keyword>
<keyword id="KW-0648">Protein biosynthesis</keyword>
<keyword id="KW-1185">Reference proteome</keyword>
<dbReference type="EMBL" id="AE000657">
    <property type="protein sequence ID" value="AAC07621.1"/>
    <property type="molecule type" value="Genomic_DNA"/>
</dbReference>
<dbReference type="PIR" id="C70453">
    <property type="entry name" value="C70453"/>
</dbReference>
<dbReference type="RefSeq" id="NP_214219.1">
    <property type="nucleotide sequence ID" value="NC_000918.1"/>
</dbReference>
<dbReference type="RefSeq" id="WP_010881156.1">
    <property type="nucleotide sequence ID" value="NC_000918.1"/>
</dbReference>
<dbReference type="SMR" id="O67653"/>
<dbReference type="FunCoup" id="O67653">
    <property type="interactions" value="471"/>
</dbReference>
<dbReference type="STRING" id="224324.aq_1777"/>
<dbReference type="EnsemblBacteria" id="AAC07621">
    <property type="protein sequence ID" value="AAC07621"/>
    <property type="gene ID" value="aq_1777"/>
</dbReference>
<dbReference type="KEGG" id="aae:aq_1777"/>
<dbReference type="PATRIC" id="fig|224324.8.peg.1374"/>
<dbReference type="eggNOG" id="COG0290">
    <property type="taxonomic scope" value="Bacteria"/>
</dbReference>
<dbReference type="HOGENOM" id="CLU_054919_3_2_0"/>
<dbReference type="InParanoid" id="O67653"/>
<dbReference type="OrthoDB" id="9806014at2"/>
<dbReference type="Proteomes" id="UP000000798">
    <property type="component" value="Chromosome"/>
</dbReference>
<dbReference type="GO" id="GO:0005829">
    <property type="term" value="C:cytosol"/>
    <property type="evidence" value="ECO:0000318"/>
    <property type="project" value="GO_Central"/>
</dbReference>
<dbReference type="GO" id="GO:0043022">
    <property type="term" value="F:ribosome binding"/>
    <property type="evidence" value="ECO:0000318"/>
    <property type="project" value="GO_Central"/>
</dbReference>
<dbReference type="GO" id="GO:0003743">
    <property type="term" value="F:translation initiation factor activity"/>
    <property type="evidence" value="ECO:0000318"/>
    <property type="project" value="GO_Central"/>
</dbReference>
<dbReference type="GO" id="GO:0032790">
    <property type="term" value="P:ribosome disassembly"/>
    <property type="evidence" value="ECO:0000318"/>
    <property type="project" value="GO_Central"/>
</dbReference>
<dbReference type="FunFam" id="3.10.20.80:FF:000001">
    <property type="entry name" value="Translation initiation factor IF-3"/>
    <property type="match status" value="1"/>
</dbReference>
<dbReference type="FunFam" id="3.30.110.10:FF:000001">
    <property type="entry name" value="Translation initiation factor IF-3"/>
    <property type="match status" value="1"/>
</dbReference>
<dbReference type="Gene3D" id="3.30.110.10">
    <property type="entry name" value="Translation initiation factor 3 (IF-3), C-terminal domain"/>
    <property type="match status" value="1"/>
</dbReference>
<dbReference type="Gene3D" id="3.10.20.80">
    <property type="entry name" value="Translation initiation factor 3 (IF-3), N-terminal domain"/>
    <property type="match status" value="1"/>
</dbReference>
<dbReference type="HAMAP" id="MF_00080">
    <property type="entry name" value="IF_3"/>
    <property type="match status" value="1"/>
</dbReference>
<dbReference type="InterPro" id="IPR036788">
    <property type="entry name" value="T_IF-3_C_sf"/>
</dbReference>
<dbReference type="InterPro" id="IPR036787">
    <property type="entry name" value="T_IF-3_N_sf"/>
</dbReference>
<dbReference type="InterPro" id="IPR019813">
    <property type="entry name" value="Translation_initiation_fac3_CS"/>
</dbReference>
<dbReference type="InterPro" id="IPR001288">
    <property type="entry name" value="Translation_initiation_fac_3"/>
</dbReference>
<dbReference type="InterPro" id="IPR019815">
    <property type="entry name" value="Translation_initiation_fac_3_C"/>
</dbReference>
<dbReference type="InterPro" id="IPR019814">
    <property type="entry name" value="Translation_initiation_fac_3_N"/>
</dbReference>
<dbReference type="NCBIfam" id="TIGR00168">
    <property type="entry name" value="infC"/>
    <property type="match status" value="1"/>
</dbReference>
<dbReference type="PANTHER" id="PTHR10938">
    <property type="entry name" value="TRANSLATION INITIATION FACTOR IF-3"/>
    <property type="match status" value="1"/>
</dbReference>
<dbReference type="PANTHER" id="PTHR10938:SF0">
    <property type="entry name" value="TRANSLATION INITIATION FACTOR IF-3, MITOCHONDRIAL"/>
    <property type="match status" value="1"/>
</dbReference>
<dbReference type="Pfam" id="PF00707">
    <property type="entry name" value="IF3_C"/>
    <property type="match status" value="1"/>
</dbReference>
<dbReference type="Pfam" id="PF05198">
    <property type="entry name" value="IF3_N"/>
    <property type="match status" value="1"/>
</dbReference>
<dbReference type="SUPFAM" id="SSF55200">
    <property type="entry name" value="Translation initiation factor IF3, C-terminal domain"/>
    <property type="match status" value="1"/>
</dbReference>
<dbReference type="SUPFAM" id="SSF54364">
    <property type="entry name" value="Translation initiation factor IF3, N-terminal domain"/>
    <property type="match status" value="1"/>
</dbReference>
<dbReference type="PROSITE" id="PS00938">
    <property type="entry name" value="IF3"/>
    <property type="match status" value="1"/>
</dbReference>